<evidence type="ECO:0000255" key="1"/>
<evidence type="ECO:0000255" key="2">
    <source>
        <dbReference type="PROSITE-ProRule" id="PRU00258"/>
    </source>
</evidence>
<evidence type="ECO:0000255" key="3">
    <source>
        <dbReference type="PROSITE-ProRule" id="PRU01348"/>
    </source>
</evidence>
<evidence type="ECO:0000255" key="4">
    <source>
        <dbReference type="PROSITE-ProRule" id="PRU01363"/>
    </source>
</evidence>
<evidence type="ECO:0000256" key="5">
    <source>
        <dbReference type="SAM" id="MobiDB-lite"/>
    </source>
</evidence>
<evidence type="ECO:0000269" key="6">
    <source>
    </source>
</evidence>
<evidence type="ECO:0000269" key="7">
    <source>
    </source>
</evidence>
<evidence type="ECO:0000269" key="8">
    <source>
    </source>
</evidence>
<evidence type="ECO:0000303" key="9">
    <source>
    </source>
</evidence>
<evidence type="ECO:0000305" key="10">
    <source>
    </source>
</evidence>
<organism>
    <name type="scientific">Talaromyces stipitatus (strain ATCC 10500 / CBS 375.48 / QM 6759 / NRRL 1006)</name>
    <name type="common">Penicillium stipitatum</name>
    <dbReference type="NCBI Taxonomy" id="441959"/>
    <lineage>
        <taxon>Eukaryota</taxon>
        <taxon>Fungi</taxon>
        <taxon>Dikarya</taxon>
        <taxon>Ascomycota</taxon>
        <taxon>Pezizomycotina</taxon>
        <taxon>Eurotiomycetes</taxon>
        <taxon>Eurotiomycetidae</taxon>
        <taxon>Eurotiales</taxon>
        <taxon>Trichocomaceae</taxon>
        <taxon>Talaromyces</taxon>
        <taxon>Talaromyces sect. Talaromyces</taxon>
    </lineage>
</organism>
<accession>B8MKY6</accession>
<keyword id="KW-0012">Acyltransferase</keyword>
<keyword id="KW-0511">Multifunctional enzyme</keyword>
<keyword id="KW-0521">NADP</keyword>
<keyword id="KW-0560">Oxidoreductase</keyword>
<keyword id="KW-0596">Phosphopantetheine</keyword>
<keyword id="KW-0597">Phosphoprotein</keyword>
<keyword id="KW-1185">Reference proteome</keyword>
<keyword id="KW-0808">Transferase</keyword>
<comment type="function">
    <text evidence="6 7">Highly reducing polyketide synthase; part of the gene cluster that mediates the biosynthesis of the antihypercholesterolemic agents phomoidrides which are dimeric anhydrides (PubMed:26558485, PubMed:36374185). The pathway begins with the highly reducing polyketide synthase tstA that catalyzes the formation of a C12-fatty acyl-ACP, starting from one acetate and 5 malonate units (PubMed:26558485, PubMed:36374185). The hydrolase tstM is involved in the release of the C12-fatty acyl chain from tstA. The alkylcitrate synthase (ACS) tstJ and the alkylcitrate dehydratase (ACDH) tstI then give rise to decarboxylated monomeric anhydrides by coupling the C12-fatty acyl chain with oxalacetic acid. The cyclase tstC is responsible for the dimerization of the monomeric anhydrides which leads to the production of prephomoidride that contains the characteristic bicyclo[4.3.1]deca-1,6-diene system of phomoidrides. Iterative oxidation catalyzed by the alpha-ketoglutarate-dependent dioxygenase tstK produced then phomoidride A. Finally, the methyltransferase tstE converts phomoidride A to phomoidride B via an acetalization reaction. The phosphatidylethanolamine-binding protein tstB and tstN are not essential for dimerization and their functions have still to be determined (PubMed:36374185).</text>
</comment>
<comment type="cofactor">
    <cofactor evidence="2">
        <name>pantetheine 4'-phosphate</name>
        <dbReference type="ChEBI" id="CHEBI:47942"/>
    </cofactor>
</comment>
<comment type="pathway">
    <text evidence="6 7">Secondary metabolite biosynthesis.</text>
</comment>
<comment type="domain">
    <text evidence="10">Multidomain protein; including a ketosynthase (KS) that catalyzes repeated decarboxylative condensation to elongate the polyketide backbone; a malonyl-CoA:ACP transacylase (MAT) that selects and transfers the extender unit malonyl-CoA; a dehydratase (DH) domain that reduces hydroxyl groups to enoyl groups; a methyltransferase (CMeT) domain responsible for the incorporation of methyl groups; an enoylreductase (ER) domain that reduces enoyl groups to alkyl group; a ketoreductase (KR) domain that catalyzes beta-ketoreduction steps; and an acyl-carrier protein (ACP) that serves as the tether of the growing and completed polyketide via its phosphopantetheinyl arm. Involvement of a non methylated polyketide intermediate in the biosynthesis of phomoidride suggests that the cMET domain in tstA may be inactive.</text>
</comment>
<comment type="biotechnology">
    <text evidence="8">Phomoidrides A and B (also known as CP-225,917 and CP-263,114) are potent inhibitors of Ras farnesyltransferase and squalene synthase (PubMed:9066758). CP-225,917 and CP-263,114 inhibit Ras farnesyl transferase from rat brain with IC(50) values of 6 uM and 20 uoM, respectively (PubMed:9066758). CP-225,917 inhibits squalene synthase with an IC(50) value of 43 uM and CP-263,114 with an IC(50) of 160 uM (PubMed:9066758).</text>
</comment>
<dbReference type="EC" id="2.3.1.-" evidence="6"/>
<dbReference type="EMBL" id="EQ962657">
    <property type="protein sequence ID" value="EED15402.1"/>
    <property type="molecule type" value="Genomic_DNA"/>
</dbReference>
<dbReference type="RefSeq" id="XP_002485355.1">
    <property type="nucleotide sequence ID" value="XM_002485310.1"/>
</dbReference>
<dbReference type="SMR" id="B8MKY6"/>
<dbReference type="STRING" id="441959.B8MKY6"/>
<dbReference type="GeneID" id="8107025"/>
<dbReference type="VEuPathDB" id="FungiDB:TSTA_048430"/>
<dbReference type="eggNOG" id="KOG1202">
    <property type="taxonomic scope" value="Eukaryota"/>
</dbReference>
<dbReference type="HOGENOM" id="CLU_000022_31_0_1"/>
<dbReference type="InParanoid" id="B8MKY6"/>
<dbReference type="OMA" id="WNHEAFY"/>
<dbReference type="OrthoDB" id="329835at2759"/>
<dbReference type="PhylomeDB" id="B8MKY6"/>
<dbReference type="Proteomes" id="UP000001745">
    <property type="component" value="Unassembled WGS sequence"/>
</dbReference>
<dbReference type="GO" id="GO:0004315">
    <property type="term" value="F:3-oxoacyl-[acyl-carrier-protein] synthase activity"/>
    <property type="evidence" value="ECO:0007669"/>
    <property type="project" value="InterPro"/>
</dbReference>
<dbReference type="GO" id="GO:0004312">
    <property type="term" value="F:fatty acid synthase activity"/>
    <property type="evidence" value="ECO:0007669"/>
    <property type="project" value="TreeGrafter"/>
</dbReference>
<dbReference type="GO" id="GO:0050637">
    <property type="term" value="F:lovastatin nonaketide synthase activity"/>
    <property type="evidence" value="ECO:0007669"/>
    <property type="project" value="UniProtKB-EC"/>
</dbReference>
<dbReference type="GO" id="GO:0016491">
    <property type="term" value="F:oxidoreductase activity"/>
    <property type="evidence" value="ECO:0007669"/>
    <property type="project" value="UniProtKB-KW"/>
</dbReference>
<dbReference type="GO" id="GO:0031177">
    <property type="term" value="F:phosphopantetheine binding"/>
    <property type="evidence" value="ECO:0007669"/>
    <property type="project" value="InterPro"/>
</dbReference>
<dbReference type="GO" id="GO:0006633">
    <property type="term" value="P:fatty acid biosynthetic process"/>
    <property type="evidence" value="ECO:0007669"/>
    <property type="project" value="InterPro"/>
</dbReference>
<dbReference type="GO" id="GO:0030639">
    <property type="term" value="P:polyketide biosynthetic process"/>
    <property type="evidence" value="ECO:0007669"/>
    <property type="project" value="UniProtKB-ARBA"/>
</dbReference>
<dbReference type="CDD" id="cd05195">
    <property type="entry name" value="enoyl_red"/>
    <property type="match status" value="1"/>
</dbReference>
<dbReference type="CDD" id="cd00833">
    <property type="entry name" value="PKS"/>
    <property type="match status" value="1"/>
</dbReference>
<dbReference type="FunFam" id="3.40.50.720:FF:000209">
    <property type="entry name" value="Polyketide synthase Pks12"/>
    <property type="match status" value="1"/>
</dbReference>
<dbReference type="Gene3D" id="3.30.70.3290">
    <property type="match status" value="1"/>
</dbReference>
<dbReference type="Gene3D" id="3.40.47.10">
    <property type="match status" value="1"/>
</dbReference>
<dbReference type="Gene3D" id="1.10.1200.10">
    <property type="entry name" value="ACP-like"/>
    <property type="match status" value="1"/>
</dbReference>
<dbReference type="Gene3D" id="3.40.366.10">
    <property type="entry name" value="Malonyl-Coenzyme A Acyl Carrier Protein, domain 2"/>
    <property type="match status" value="1"/>
</dbReference>
<dbReference type="Gene3D" id="3.90.180.10">
    <property type="entry name" value="Medium-chain alcohol dehydrogenases, catalytic domain"/>
    <property type="match status" value="1"/>
</dbReference>
<dbReference type="Gene3D" id="3.40.50.720">
    <property type="entry name" value="NAD(P)-binding Rossmann-like Domain"/>
    <property type="match status" value="3"/>
</dbReference>
<dbReference type="Gene3D" id="3.10.129.110">
    <property type="entry name" value="Polyketide synthase dehydratase"/>
    <property type="match status" value="1"/>
</dbReference>
<dbReference type="Gene3D" id="3.40.50.150">
    <property type="entry name" value="Vaccinia Virus protein VP39"/>
    <property type="match status" value="1"/>
</dbReference>
<dbReference type="InterPro" id="IPR001227">
    <property type="entry name" value="Ac_transferase_dom_sf"/>
</dbReference>
<dbReference type="InterPro" id="IPR036736">
    <property type="entry name" value="ACP-like_sf"/>
</dbReference>
<dbReference type="InterPro" id="IPR014043">
    <property type="entry name" value="Acyl_transferase_dom"/>
</dbReference>
<dbReference type="InterPro" id="IPR016035">
    <property type="entry name" value="Acyl_Trfase/lysoPLipase"/>
</dbReference>
<dbReference type="InterPro" id="IPR013154">
    <property type="entry name" value="ADH-like_N"/>
</dbReference>
<dbReference type="InterPro" id="IPR011032">
    <property type="entry name" value="GroES-like_sf"/>
</dbReference>
<dbReference type="InterPro" id="IPR018201">
    <property type="entry name" value="Ketoacyl_synth_AS"/>
</dbReference>
<dbReference type="InterPro" id="IPR014031">
    <property type="entry name" value="Ketoacyl_synth_C"/>
</dbReference>
<dbReference type="InterPro" id="IPR014030">
    <property type="entry name" value="Ketoacyl_synth_N"/>
</dbReference>
<dbReference type="InterPro" id="IPR016036">
    <property type="entry name" value="Malonyl_transacylase_ACP-bd"/>
</dbReference>
<dbReference type="InterPro" id="IPR036291">
    <property type="entry name" value="NAD(P)-bd_dom_sf"/>
</dbReference>
<dbReference type="InterPro" id="IPR056501">
    <property type="entry name" value="NAD-bd_HRPKS_sdrA"/>
</dbReference>
<dbReference type="InterPro" id="IPR032821">
    <property type="entry name" value="PKS_assoc"/>
</dbReference>
<dbReference type="InterPro" id="IPR020841">
    <property type="entry name" value="PKS_Beta-ketoAc_synthase_dom"/>
</dbReference>
<dbReference type="InterPro" id="IPR042104">
    <property type="entry name" value="PKS_dehydratase_sf"/>
</dbReference>
<dbReference type="InterPro" id="IPR020807">
    <property type="entry name" value="PKS_DH"/>
</dbReference>
<dbReference type="InterPro" id="IPR049551">
    <property type="entry name" value="PKS_DH_C"/>
</dbReference>
<dbReference type="InterPro" id="IPR049552">
    <property type="entry name" value="PKS_DH_N"/>
</dbReference>
<dbReference type="InterPro" id="IPR020843">
    <property type="entry name" value="PKS_ER"/>
</dbReference>
<dbReference type="InterPro" id="IPR013968">
    <property type="entry name" value="PKS_KR"/>
</dbReference>
<dbReference type="InterPro" id="IPR049900">
    <property type="entry name" value="PKS_mFAS_DH"/>
</dbReference>
<dbReference type="InterPro" id="IPR050091">
    <property type="entry name" value="PKS_NRPS_Biosynth_Enz"/>
</dbReference>
<dbReference type="InterPro" id="IPR020806">
    <property type="entry name" value="PKS_PP-bd"/>
</dbReference>
<dbReference type="InterPro" id="IPR009081">
    <property type="entry name" value="PP-bd_ACP"/>
</dbReference>
<dbReference type="InterPro" id="IPR006162">
    <property type="entry name" value="Ppantetheine_attach_site"/>
</dbReference>
<dbReference type="InterPro" id="IPR029063">
    <property type="entry name" value="SAM-dependent_MTases_sf"/>
</dbReference>
<dbReference type="InterPro" id="IPR016039">
    <property type="entry name" value="Thiolase-like"/>
</dbReference>
<dbReference type="PANTHER" id="PTHR43775:SF29">
    <property type="entry name" value="ASPERFURANONE POLYKETIDE SYNTHASE AFOG-RELATED"/>
    <property type="match status" value="1"/>
</dbReference>
<dbReference type="PANTHER" id="PTHR43775">
    <property type="entry name" value="FATTY ACID SYNTHASE"/>
    <property type="match status" value="1"/>
</dbReference>
<dbReference type="Pfam" id="PF23297">
    <property type="entry name" value="ACP_SdgA_C"/>
    <property type="match status" value="1"/>
</dbReference>
<dbReference type="Pfam" id="PF00698">
    <property type="entry name" value="Acyl_transf_1"/>
    <property type="match status" value="1"/>
</dbReference>
<dbReference type="Pfam" id="PF08240">
    <property type="entry name" value="ADH_N"/>
    <property type="match status" value="1"/>
</dbReference>
<dbReference type="Pfam" id="PF13602">
    <property type="entry name" value="ADH_zinc_N_2"/>
    <property type="match status" value="1"/>
</dbReference>
<dbReference type="Pfam" id="PF16197">
    <property type="entry name" value="KAsynt_C_assoc"/>
    <property type="match status" value="1"/>
</dbReference>
<dbReference type="Pfam" id="PF00109">
    <property type="entry name" value="ketoacyl-synt"/>
    <property type="match status" value="1"/>
</dbReference>
<dbReference type="Pfam" id="PF02801">
    <property type="entry name" value="Ketoacyl-synt_C"/>
    <property type="match status" value="1"/>
</dbReference>
<dbReference type="Pfam" id="PF08659">
    <property type="entry name" value="KR"/>
    <property type="match status" value="1"/>
</dbReference>
<dbReference type="Pfam" id="PF23114">
    <property type="entry name" value="NAD-bd_HRPKS_sdrA"/>
    <property type="match status" value="1"/>
</dbReference>
<dbReference type="Pfam" id="PF21089">
    <property type="entry name" value="PKS_DH_N"/>
    <property type="match status" value="1"/>
</dbReference>
<dbReference type="Pfam" id="PF14765">
    <property type="entry name" value="PS-DH"/>
    <property type="match status" value="1"/>
</dbReference>
<dbReference type="SMART" id="SM00827">
    <property type="entry name" value="PKS_AT"/>
    <property type="match status" value="1"/>
</dbReference>
<dbReference type="SMART" id="SM00826">
    <property type="entry name" value="PKS_DH"/>
    <property type="match status" value="1"/>
</dbReference>
<dbReference type="SMART" id="SM00829">
    <property type="entry name" value="PKS_ER"/>
    <property type="match status" value="1"/>
</dbReference>
<dbReference type="SMART" id="SM00822">
    <property type="entry name" value="PKS_KR"/>
    <property type="match status" value="1"/>
</dbReference>
<dbReference type="SMART" id="SM00825">
    <property type="entry name" value="PKS_KS"/>
    <property type="match status" value="1"/>
</dbReference>
<dbReference type="SMART" id="SM00823">
    <property type="entry name" value="PKS_PP"/>
    <property type="match status" value="1"/>
</dbReference>
<dbReference type="SUPFAM" id="SSF47336">
    <property type="entry name" value="ACP-like"/>
    <property type="match status" value="1"/>
</dbReference>
<dbReference type="SUPFAM" id="SSF52151">
    <property type="entry name" value="FabD/lysophospholipase-like"/>
    <property type="match status" value="1"/>
</dbReference>
<dbReference type="SUPFAM" id="SSF50129">
    <property type="entry name" value="GroES-like"/>
    <property type="match status" value="1"/>
</dbReference>
<dbReference type="SUPFAM" id="SSF51735">
    <property type="entry name" value="NAD(P)-binding Rossmann-fold domains"/>
    <property type="match status" value="2"/>
</dbReference>
<dbReference type="SUPFAM" id="SSF55048">
    <property type="entry name" value="Probable ACP-binding domain of malonyl-CoA ACP transacylase"/>
    <property type="match status" value="1"/>
</dbReference>
<dbReference type="SUPFAM" id="SSF53335">
    <property type="entry name" value="S-adenosyl-L-methionine-dependent methyltransferases"/>
    <property type="match status" value="1"/>
</dbReference>
<dbReference type="SUPFAM" id="SSF53901">
    <property type="entry name" value="Thiolase-like"/>
    <property type="match status" value="1"/>
</dbReference>
<dbReference type="PROSITE" id="PS50075">
    <property type="entry name" value="CARRIER"/>
    <property type="match status" value="1"/>
</dbReference>
<dbReference type="PROSITE" id="PS00606">
    <property type="entry name" value="KS3_1"/>
    <property type="match status" value="1"/>
</dbReference>
<dbReference type="PROSITE" id="PS52004">
    <property type="entry name" value="KS3_2"/>
    <property type="match status" value="1"/>
</dbReference>
<dbReference type="PROSITE" id="PS00012">
    <property type="entry name" value="PHOSPHOPANTETHEINE"/>
    <property type="match status" value="1"/>
</dbReference>
<dbReference type="PROSITE" id="PS52019">
    <property type="entry name" value="PKS_MFAS_DH"/>
    <property type="match status" value="1"/>
</dbReference>
<protein>
    <recommendedName>
        <fullName evidence="9">Highly reducing polyketide synthase tstA</fullName>
        <shortName evidence="9">HR-PKS phiA</shortName>
        <ecNumber evidence="6">2.3.1.-</ecNumber>
    </recommendedName>
    <alternativeName>
        <fullName evidence="9">Phomoidride biosynthesis cluster protein A</fullName>
    </alternativeName>
</protein>
<name>TSTA_TALSN</name>
<sequence length="2570" mass="280373">MSPLIHDDQPYSWNAAMPIAVVGIGFRGPGDATNVENLFRMIAEGRESRIDIPKEKWNHEAFYHPDPSRFGTHNVTGGHYFQQDVSRFDAPFFNMTAAEAAALDPQQRMLLECTYEAMENSGTKMHDFVGSNTSVFVGSFCADYADVLWRDPETVPMYQCTNAGHSRANTANRVSYIYDLKGPSVTVDTACSASLVALHLGCQSLRTGDAKQALVAGCSAILSHEGMVTMSMMRLLSPEGRCYTFDERAGGYARGDGVGAILLKPLQDALDAGDTIRAVIRGTGSNQDGKTPGITMPSGTAQEALVRSVYEKIGLDPLDTSYVECHGTGTQAGDVTETSALARVFEPGRPKDEPLVIGSVKTNIGHLEGASGVAGVIKTILMLENGLILPNRNFQKGNPKILFDEWKLRVPLGVENWEISKPRRASVNSFGYGGANAHVVLENAQDYLRNHNWEFRSHTRKSATESSGTSTPSNPGPHGRLFVFSSFDEATGKKYLQSFEKYIEDRLQIADSEEFLDDLAYTLGERRTNHTWRTAVPAQSAEELLSNLREGINLGNASQTKNRKIGFVFTGQGAQWCGMGKELIDQYPVFKETIEKAGIACQKAGATFDLETELRKDPKESAINRAIYSQPLSTAVQLGLIDLLASWGVKPTSVTGHSSGEIASAYAAGALSLEDAMLVSYSRGVVSSKMAERATVPGCMMAIGMSKEEVLPIVSTLTKGKVVVACSNSPSSVTASGDLPAIDELHTVLDEKGVFNRKLVVEVAYHSHHMELVKEEYRNAISSIKVQPGNDVEFFSSVTGERASISGLGPDYWVSNMIGEVKFNDSLGRLCLETEGPSATTKKSAQRRKAKVSPVSTLIEIGPHSALAGPIKQIIQANETLNKASIKYYSALVRNKNAATTVLNLVGQLFVAGHEPSLEKVNRPTGLESHSVLIDLPPYAWNHANSYWAESRISKFYRERRFPRTDLLGVLERNSSSIEPRWRNHIRLSEIPWVRDHKIQGNIVYPAAGYLAMAIEAACQHAITVKSIPTITGYKLREVVIDSALIIPENPGEVEVAITLKSFTDSIRNPSDMWDEFVISSVNADSRWTEHCRGLVSVVAPQKVVNVIDGQAQSIAEKQGYAELVASYETKCRRNINVPQFYEQLIELGLEYGPTFANLKRAKAAPNACIGDLEIPDTAAVMPYNFQFPFVIHPATLDALFHTIFAALATANGGTLKDPAVPVSASEIFVSANITSKPGDKLATYTSTEQKDYRFMSASMTVFHESQKQQGAFEPVIEIKDLTCATLAREGADPSTDGQVTKAYNLAWKPSIDLLSQSEILELCAKTSSPEGNTNATNARELLERAAYYMLKRAVAGYAPPETNSAYAQQLWSFLKSQSRVASWKHAYDGWDQLFKADVDAFIDKVVSSSSVGKFLVEVGDKLPNLVKGENSSAEFIKELDLKVFVDNTQLFQNTQSAARYFDLLQHKTPSLSVLAVGPGSGVASLGFLALLNKKSSAPFERYEHNDVEFDIRDVVKEKFPQWAQLIGTKQVDISREIQGQEDIEPNSYDVLVAFHVLGDATGMNNVLAQSKQLLKPDGKVLFIGRPLKSLVASVLFGYVPSVLAETGSTSDRSNLSPAEIDDMVSASGYSKVTAIATSINSNNYSMMVVSASASQDTSAKPQKVHVIAEDESTSQPSLLAGLKEEGIEVTVSSLSEASPTPDHMCIVLSDLSNKTVLSDPSVQEWEALKKIMLEAKGVLWVTRGSAVTTSNPNGSMATGLSRTIRSERGDVPVVTLDLDAERTLDDAVSTDIILKVFRKSFYPAFTASEVEQEYAERKGRLLVPRLIEDEELTKTLAIATEGAKGQLEPLHQPGRPLRMFVGTPGLLDSIFWTDDDRVETPLPDDWVEMEVKASGFNFKDVMMAMGQIKVENLGWECSGILTKVGPAVTGLAVGDRVVCHASGTFCTNARVHVDNVRKIPDTMSFEIAASLPVTYVTAYHSIYNIARLQKGETILVHAATGGLGQAIIELCQLIGAEIFATVGTLDKKKFLIDHFHIPEDHIFFSRDQSFAAGIKRMTRGKGVDAVMNSLAGEGLRLSWECIAPYGRFVELGQRDIGINSRLEMGQFIKNTSFTAFNLAYMVQYNPKVANEVFTSVLNLFWKDAIKGPSPVEVYSFSDVEKAFRRMQTGGHMGKLVGTADTDAMVKVIPLDRSKSLLRSDASYVLIGGLGGIGRATALWMVEHGARNVIFVNRSGVKVDEARETIRVLEEMECKTAIFPCDITNENQVETFVGDAAKAMPPIKGVIQGAMLLRDTLFEKMSLEDYITVLRPKVQGTFNLHKYLPKDMDFFIMESSVSGIVGNASQAAYAAGNTFLDAFASYRVSQGLPATTIDLGAISGVGYLSTNSELKQAMERQGFEFTNPKRLMALIESAIRNPARPGQQAHIITGLGTWNEDSSLGALTLPMFSHFRHLSAGNADWGKSGSGNNLKSALKAAKTLDDASELILGALIDKIASRSGIGPENINTSKSMPDYGIDSLVAVEMRNWITKDMDSTLPVLELLASDPLTHLATKIAQRSRSVQVAEQTHE</sequence>
<reference key="1">
    <citation type="journal article" date="2015" name="Genome Announc.">
        <title>Genome sequence of the AIDS-associated pathogen Penicillium marneffei (ATCC18224) and its near taxonomic relative Talaromyces stipitatus (ATCC10500).</title>
        <authorList>
            <person name="Nierman W.C."/>
            <person name="Fedorova-Abrams N.D."/>
            <person name="Andrianopoulos A."/>
        </authorList>
    </citation>
    <scope>NUCLEOTIDE SEQUENCE [LARGE SCALE GENOMIC DNA]</scope>
    <source>
        <strain>ATCC 10500 / CBS 375.48 / QM 6759 / NRRL 1006</strain>
    </source>
</reference>
<reference key="2">
    <citation type="journal article" date="1997" name="J. Antibiot.">
        <title>CP-225,917 and CP-263,114, novel Ras farnesylation inhibitors from an unidentified fungus. I. Taxonomy, fermentation, isolation, and biochemical properties.</title>
        <authorList>
            <person name="Dabrah T.T."/>
            <person name="Harwood H.J. Jr."/>
            <person name="Huang L.H."/>
            <person name="Jankovich N.D."/>
            <person name="Kaneko T."/>
            <person name="Li J.C."/>
            <person name="Lindsey S."/>
            <person name="Moshier P.M."/>
            <person name="Subashi T.A."/>
            <person name="Therrien M."/>
            <person name="Watts P.C."/>
        </authorList>
    </citation>
    <scope>BIOTECHNOLOGY</scope>
</reference>
<reference key="3">
    <citation type="journal article" date="2015" name="Org. Lett.">
        <title>Biosynthetic study on antihypercholesterolemic agent phomoidride: general biogenesis of fungal dimeric anhydrides.</title>
        <authorList>
            <person name="Fujii R."/>
            <person name="Matsu Y."/>
            <person name="Minami A."/>
            <person name="Nagamine S."/>
            <person name="Takeuchi I."/>
            <person name="Gomi K."/>
            <person name="Oikawa H."/>
        </authorList>
    </citation>
    <scope>FUNCTION</scope>
    <scope>CATALYTIC ACTIVITY</scope>
    <scope>PATHWAY</scope>
</reference>
<reference key="4">
    <citation type="journal article" date="2022" name="J. Am. Chem. Soc.">
        <title>Elucidation of late-stage biosynthesis of phomoidride: proposal of cyclization mechanism affording characteristic nine-membered ring of fungal dimeric anhydride.</title>
        <authorList>
            <person name="Yamamoto S."/>
            <person name="Matsuyama T."/>
            <person name="Ozaki T."/>
            <person name="Takino J."/>
            <person name="Sato H."/>
            <person name="Uchiyama M."/>
            <person name="Minami A."/>
            <person name="Oikawa H."/>
        </authorList>
    </citation>
    <scope>FUNCTION</scope>
    <scope>CATALYTIC ACTIVITY</scope>
    <scope>PATHWAY</scope>
</reference>
<feature type="chain" id="PRO_0000458943" description="Highly reducing polyketide synthase tstA">
    <location>
        <begin position="1"/>
        <end position="2570"/>
    </location>
</feature>
<feature type="domain" description="Ketosynthase family 3 (KS3)" evidence="3 10">
    <location>
        <begin position="16"/>
        <end position="443"/>
    </location>
</feature>
<feature type="domain" description="Malonyl-CoA:ACP transacylase (MAT)" evidence="1 10">
    <location>
        <begin position="567"/>
        <end position="898"/>
    </location>
</feature>
<feature type="domain" description="PKS/mFAS DH" evidence="4 10">
    <location>
        <begin position="965"/>
        <end position="1293"/>
    </location>
</feature>
<feature type="domain" description="Enoyl reductase (ER)" evidence="1 10">
    <location>
        <begin position="1866"/>
        <end position="2178"/>
    </location>
</feature>
<feature type="domain" description="Ketoreductase (KR)" evidence="1 10">
    <location>
        <begin position="2202"/>
        <end position="2379"/>
    </location>
</feature>
<feature type="domain" description="Carrier" evidence="2 10">
    <location>
        <begin position="2482"/>
        <end position="2559"/>
    </location>
</feature>
<feature type="region of interest" description="Disordered" evidence="5">
    <location>
        <begin position="458"/>
        <end position="478"/>
    </location>
</feature>
<feature type="region of interest" description="N-terminal hotdog fold" evidence="4">
    <location>
        <begin position="965"/>
        <end position="1103"/>
    </location>
</feature>
<feature type="region of interest" description="C-terminal hotdog fold" evidence="4">
    <location>
        <begin position="1133"/>
        <end position="1293"/>
    </location>
</feature>
<feature type="region of interest" description="Methyltransferase (CMeT) domain" evidence="1 10">
    <location>
        <begin position="1343"/>
        <end position="1645"/>
    </location>
</feature>
<feature type="compositionally biased region" description="Low complexity" evidence="5">
    <location>
        <begin position="464"/>
        <end position="478"/>
    </location>
</feature>
<feature type="active site" description="For beta-ketoacyl synthase activity" evidence="3">
    <location>
        <position position="191"/>
    </location>
</feature>
<feature type="active site" description="For beta-ketoacyl synthase activity" evidence="3">
    <location>
        <position position="326"/>
    </location>
</feature>
<feature type="active site" description="For beta-ketoacyl synthase activity" evidence="3">
    <location>
        <position position="366"/>
    </location>
</feature>
<feature type="active site" description="Proton acceptor; for dehydratase activity" evidence="4">
    <location>
        <position position="997"/>
    </location>
</feature>
<feature type="active site" description="Proton donor; for dehydratase activity" evidence="4">
    <location>
        <position position="1198"/>
    </location>
</feature>
<feature type="modified residue" description="O-(pantetheine 4'-phosphoryl)serine" evidence="2">
    <location>
        <position position="2519"/>
    </location>
</feature>
<gene>
    <name evidence="9" type="primary">tstA</name>
    <name type="ORF">TSTA_048430</name>
</gene>
<proteinExistence type="evidence at protein level"/>